<comment type="function">
    <text evidence="1">Catalyzes the conversion of glucosamine-6-phosphate to glucosamine-1-phosphate.</text>
</comment>
<comment type="catalytic activity">
    <reaction evidence="1">
        <text>alpha-D-glucosamine 1-phosphate = D-glucosamine 6-phosphate</text>
        <dbReference type="Rhea" id="RHEA:23424"/>
        <dbReference type="ChEBI" id="CHEBI:58516"/>
        <dbReference type="ChEBI" id="CHEBI:58725"/>
        <dbReference type="EC" id="5.4.2.10"/>
    </reaction>
</comment>
<comment type="cofactor">
    <cofactor evidence="1">
        <name>Mg(2+)</name>
        <dbReference type="ChEBI" id="CHEBI:18420"/>
    </cofactor>
    <text evidence="1">Binds 1 Mg(2+) ion per subunit.</text>
</comment>
<comment type="PTM">
    <text evidence="1">Activated by phosphorylation.</text>
</comment>
<comment type="similarity">
    <text evidence="1">Belongs to the phosphohexose mutase family.</text>
</comment>
<proteinExistence type="inferred from homology"/>
<sequence>MSRKYFGTDGIRGRVGEYPITPDFMLKLGWAAGMAFRKQGNCRVLVGKDTRISGYMFESALEAGLSAAGADVLLLGPMPTPAIAYLTRTFHAEAGIVISASHNPHDDNGIKFFSGQGTKLPDEIELMIEELLDQPMTVVDSSKLGKVSRINDAAGRYIEFCKSSVPTSTGFEGLKLVVDCAHGATYKVAPSVFRELGAEVTVLHAQPDGLNINENCGSTHIESLQAAVLVGHADLGIAFDGDGDRVLMVDHTGAIVDGDELLFIIARDLHERGKLQGGVVGTLMSNLGLELALKDLDIPFVRAKVGDRYVMAELLERGWLVGGENSGHVVCCNHTTTGDAIIAALQVLLALRRRGETLAQARQALRKCPQVLINVRFGASKVDPLEHPAVKEASARVTEDMAGRGRVLLRKSGTEPLVRVMVEGDDENQVRTHAEALAKLVAEVCV</sequence>
<feature type="chain" id="PRO_1000201127" description="Phosphoglucosamine mutase">
    <location>
        <begin position="1"/>
        <end position="446"/>
    </location>
</feature>
<feature type="active site" description="Phosphoserine intermediate" evidence="1">
    <location>
        <position position="101"/>
    </location>
</feature>
<feature type="binding site" description="via phosphate group" evidence="1">
    <location>
        <position position="101"/>
    </location>
    <ligand>
        <name>Mg(2+)</name>
        <dbReference type="ChEBI" id="CHEBI:18420"/>
    </ligand>
</feature>
<feature type="binding site" evidence="1">
    <location>
        <position position="240"/>
    </location>
    <ligand>
        <name>Mg(2+)</name>
        <dbReference type="ChEBI" id="CHEBI:18420"/>
    </ligand>
</feature>
<feature type="binding site" evidence="1">
    <location>
        <position position="242"/>
    </location>
    <ligand>
        <name>Mg(2+)</name>
        <dbReference type="ChEBI" id="CHEBI:18420"/>
    </ligand>
</feature>
<feature type="binding site" evidence="1">
    <location>
        <position position="244"/>
    </location>
    <ligand>
        <name>Mg(2+)</name>
        <dbReference type="ChEBI" id="CHEBI:18420"/>
    </ligand>
</feature>
<feature type="modified residue" description="Phosphoserine" evidence="1">
    <location>
        <position position="101"/>
    </location>
</feature>
<gene>
    <name evidence="1" type="primary">glmM</name>
    <name type="ordered locus">PputW619_0716</name>
</gene>
<evidence type="ECO:0000255" key="1">
    <source>
        <dbReference type="HAMAP-Rule" id="MF_01554"/>
    </source>
</evidence>
<organism>
    <name type="scientific">Pseudomonas putida (strain W619)</name>
    <dbReference type="NCBI Taxonomy" id="390235"/>
    <lineage>
        <taxon>Bacteria</taxon>
        <taxon>Pseudomonadati</taxon>
        <taxon>Pseudomonadota</taxon>
        <taxon>Gammaproteobacteria</taxon>
        <taxon>Pseudomonadales</taxon>
        <taxon>Pseudomonadaceae</taxon>
        <taxon>Pseudomonas</taxon>
    </lineage>
</organism>
<reference key="1">
    <citation type="submission" date="2008-02" db="EMBL/GenBank/DDBJ databases">
        <title>Complete sequence of Pseudomonas putida W619.</title>
        <authorList>
            <person name="Copeland A."/>
            <person name="Lucas S."/>
            <person name="Lapidus A."/>
            <person name="Barry K."/>
            <person name="Detter J.C."/>
            <person name="Glavina del Rio T."/>
            <person name="Dalin E."/>
            <person name="Tice H."/>
            <person name="Pitluck S."/>
            <person name="Chain P."/>
            <person name="Malfatti S."/>
            <person name="Shin M."/>
            <person name="Vergez L."/>
            <person name="Schmutz J."/>
            <person name="Larimer F."/>
            <person name="Land M."/>
            <person name="Hauser L."/>
            <person name="Kyrpides N."/>
            <person name="Kim E."/>
            <person name="Taghavi S."/>
            <person name="Vangronsveld D."/>
            <person name="van der Lelie D."/>
            <person name="Richardson P."/>
        </authorList>
    </citation>
    <scope>NUCLEOTIDE SEQUENCE [LARGE SCALE GENOMIC DNA]</scope>
    <source>
        <strain>W619</strain>
    </source>
</reference>
<keyword id="KW-0413">Isomerase</keyword>
<keyword id="KW-0460">Magnesium</keyword>
<keyword id="KW-0479">Metal-binding</keyword>
<keyword id="KW-0597">Phosphoprotein</keyword>
<protein>
    <recommendedName>
        <fullName evidence="1">Phosphoglucosamine mutase</fullName>
        <ecNumber evidence="1">5.4.2.10</ecNumber>
    </recommendedName>
</protein>
<accession>B1J265</accession>
<name>GLMM_PSEPW</name>
<dbReference type="EC" id="5.4.2.10" evidence="1"/>
<dbReference type="EMBL" id="CP000949">
    <property type="protein sequence ID" value="ACA71221.1"/>
    <property type="molecule type" value="Genomic_DNA"/>
</dbReference>
<dbReference type="SMR" id="B1J265"/>
<dbReference type="STRING" id="390235.PputW619_0716"/>
<dbReference type="KEGG" id="ppw:PputW619_0716"/>
<dbReference type="eggNOG" id="COG1109">
    <property type="taxonomic scope" value="Bacteria"/>
</dbReference>
<dbReference type="HOGENOM" id="CLU_016950_7_0_6"/>
<dbReference type="OrthoDB" id="9803322at2"/>
<dbReference type="GO" id="GO:0005829">
    <property type="term" value="C:cytosol"/>
    <property type="evidence" value="ECO:0007669"/>
    <property type="project" value="TreeGrafter"/>
</dbReference>
<dbReference type="GO" id="GO:0000287">
    <property type="term" value="F:magnesium ion binding"/>
    <property type="evidence" value="ECO:0007669"/>
    <property type="project" value="UniProtKB-UniRule"/>
</dbReference>
<dbReference type="GO" id="GO:0008966">
    <property type="term" value="F:phosphoglucosamine mutase activity"/>
    <property type="evidence" value="ECO:0007669"/>
    <property type="project" value="UniProtKB-UniRule"/>
</dbReference>
<dbReference type="GO" id="GO:0004615">
    <property type="term" value="F:phosphomannomutase activity"/>
    <property type="evidence" value="ECO:0007669"/>
    <property type="project" value="TreeGrafter"/>
</dbReference>
<dbReference type="GO" id="GO:0005975">
    <property type="term" value="P:carbohydrate metabolic process"/>
    <property type="evidence" value="ECO:0007669"/>
    <property type="project" value="InterPro"/>
</dbReference>
<dbReference type="GO" id="GO:0009252">
    <property type="term" value="P:peptidoglycan biosynthetic process"/>
    <property type="evidence" value="ECO:0007669"/>
    <property type="project" value="TreeGrafter"/>
</dbReference>
<dbReference type="GO" id="GO:0006048">
    <property type="term" value="P:UDP-N-acetylglucosamine biosynthetic process"/>
    <property type="evidence" value="ECO:0007669"/>
    <property type="project" value="TreeGrafter"/>
</dbReference>
<dbReference type="CDD" id="cd05802">
    <property type="entry name" value="GlmM"/>
    <property type="match status" value="1"/>
</dbReference>
<dbReference type="FunFam" id="3.30.310.50:FF:000001">
    <property type="entry name" value="Phosphoglucosamine mutase"/>
    <property type="match status" value="1"/>
</dbReference>
<dbReference type="FunFam" id="3.40.120.10:FF:000001">
    <property type="entry name" value="Phosphoglucosamine mutase"/>
    <property type="match status" value="1"/>
</dbReference>
<dbReference type="FunFam" id="3.40.120.10:FF:000003">
    <property type="entry name" value="Phosphoglucosamine mutase"/>
    <property type="match status" value="1"/>
</dbReference>
<dbReference type="Gene3D" id="3.40.120.10">
    <property type="entry name" value="Alpha-D-Glucose-1,6-Bisphosphate, subunit A, domain 3"/>
    <property type="match status" value="3"/>
</dbReference>
<dbReference type="Gene3D" id="3.30.310.50">
    <property type="entry name" value="Alpha-D-phosphohexomutase, C-terminal domain"/>
    <property type="match status" value="1"/>
</dbReference>
<dbReference type="HAMAP" id="MF_01554_B">
    <property type="entry name" value="GlmM_B"/>
    <property type="match status" value="1"/>
</dbReference>
<dbReference type="InterPro" id="IPR005844">
    <property type="entry name" value="A-D-PHexomutase_a/b/a-I"/>
</dbReference>
<dbReference type="InterPro" id="IPR016055">
    <property type="entry name" value="A-D-PHexomutase_a/b/a-I/II/III"/>
</dbReference>
<dbReference type="InterPro" id="IPR005845">
    <property type="entry name" value="A-D-PHexomutase_a/b/a-II"/>
</dbReference>
<dbReference type="InterPro" id="IPR005846">
    <property type="entry name" value="A-D-PHexomutase_a/b/a-III"/>
</dbReference>
<dbReference type="InterPro" id="IPR005843">
    <property type="entry name" value="A-D-PHexomutase_C"/>
</dbReference>
<dbReference type="InterPro" id="IPR036900">
    <property type="entry name" value="A-D-PHexomutase_C_sf"/>
</dbReference>
<dbReference type="InterPro" id="IPR016066">
    <property type="entry name" value="A-D-PHexomutase_CS"/>
</dbReference>
<dbReference type="InterPro" id="IPR005841">
    <property type="entry name" value="Alpha-D-phosphohexomutase_SF"/>
</dbReference>
<dbReference type="InterPro" id="IPR006352">
    <property type="entry name" value="GlmM_bact"/>
</dbReference>
<dbReference type="InterPro" id="IPR050060">
    <property type="entry name" value="Phosphoglucosamine_mutase"/>
</dbReference>
<dbReference type="NCBIfam" id="TIGR01455">
    <property type="entry name" value="glmM"/>
    <property type="match status" value="1"/>
</dbReference>
<dbReference type="NCBIfam" id="NF008139">
    <property type="entry name" value="PRK10887.1"/>
    <property type="match status" value="1"/>
</dbReference>
<dbReference type="PANTHER" id="PTHR42946:SF1">
    <property type="entry name" value="PHOSPHOGLUCOMUTASE (ALPHA-D-GLUCOSE-1,6-BISPHOSPHATE-DEPENDENT)"/>
    <property type="match status" value="1"/>
</dbReference>
<dbReference type="PANTHER" id="PTHR42946">
    <property type="entry name" value="PHOSPHOHEXOSE MUTASE"/>
    <property type="match status" value="1"/>
</dbReference>
<dbReference type="Pfam" id="PF02878">
    <property type="entry name" value="PGM_PMM_I"/>
    <property type="match status" value="1"/>
</dbReference>
<dbReference type="Pfam" id="PF02879">
    <property type="entry name" value="PGM_PMM_II"/>
    <property type="match status" value="1"/>
</dbReference>
<dbReference type="Pfam" id="PF02880">
    <property type="entry name" value="PGM_PMM_III"/>
    <property type="match status" value="1"/>
</dbReference>
<dbReference type="Pfam" id="PF00408">
    <property type="entry name" value="PGM_PMM_IV"/>
    <property type="match status" value="1"/>
</dbReference>
<dbReference type="PRINTS" id="PR00509">
    <property type="entry name" value="PGMPMM"/>
</dbReference>
<dbReference type="SUPFAM" id="SSF55957">
    <property type="entry name" value="Phosphoglucomutase, C-terminal domain"/>
    <property type="match status" value="1"/>
</dbReference>
<dbReference type="SUPFAM" id="SSF53738">
    <property type="entry name" value="Phosphoglucomutase, first 3 domains"/>
    <property type="match status" value="3"/>
</dbReference>
<dbReference type="PROSITE" id="PS00710">
    <property type="entry name" value="PGM_PMM"/>
    <property type="match status" value="1"/>
</dbReference>